<comment type="similarity">
    <text evidence="1">Belongs to the UPF0125 (RnfH) family.</text>
</comment>
<accession>Q02FQ6</accession>
<sequence length="101" mass="10980">MAEIAVEVVYALPERQALLRLSVPAGTSAREAVLLSGIAEAFPGLDVQGCPLGIFGKLLARPEERVLETGERVEIYRPLIADPKEVRKQRAARARSEREGG</sequence>
<organism>
    <name type="scientific">Pseudomonas aeruginosa (strain UCBPP-PA14)</name>
    <dbReference type="NCBI Taxonomy" id="208963"/>
    <lineage>
        <taxon>Bacteria</taxon>
        <taxon>Pseudomonadati</taxon>
        <taxon>Pseudomonadota</taxon>
        <taxon>Gammaproteobacteria</taxon>
        <taxon>Pseudomonadales</taxon>
        <taxon>Pseudomonadaceae</taxon>
        <taxon>Pseudomonas</taxon>
    </lineage>
</organism>
<proteinExistence type="inferred from homology"/>
<feature type="chain" id="PRO_1000013585" description="Protein RnfH">
    <location>
        <begin position="1"/>
        <end position="101"/>
    </location>
</feature>
<protein>
    <recommendedName>
        <fullName evidence="1">Protein RnfH</fullName>
    </recommendedName>
</protein>
<gene>
    <name evidence="1" type="primary">rnfH</name>
    <name type="ordered locus">PA14_63040</name>
</gene>
<dbReference type="EMBL" id="CP000438">
    <property type="protein sequence ID" value="ABJ14149.1"/>
    <property type="molecule type" value="Genomic_DNA"/>
</dbReference>
<dbReference type="RefSeq" id="WP_004365388.1">
    <property type="nucleotide sequence ID" value="NZ_CP034244.1"/>
</dbReference>
<dbReference type="SMR" id="Q02FQ6"/>
<dbReference type="KEGG" id="pau:PA14_63040"/>
<dbReference type="PseudoCAP" id="PA14_63040"/>
<dbReference type="HOGENOM" id="CLU_150721_1_0_6"/>
<dbReference type="BioCyc" id="PAER208963:G1G74-5332-MONOMER"/>
<dbReference type="Proteomes" id="UP000000653">
    <property type="component" value="Chromosome"/>
</dbReference>
<dbReference type="Gene3D" id="3.10.20.280">
    <property type="entry name" value="RnfH-like"/>
    <property type="match status" value="1"/>
</dbReference>
<dbReference type="HAMAP" id="MF_00460">
    <property type="entry name" value="UPF0125_RnfH"/>
    <property type="match status" value="1"/>
</dbReference>
<dbReference type="InterPro" id="IPR016155">
    <property type="entry name" value="Mopterin_synth/thiamin_S_b"/>
</dbReference>
<dbReference type="InterPro" id="IPR005346">
    <property type="entry name" value="RnfH"/>
</dbReference>
<dbReference type="InterPro" id="IPR037021">
    <property type="entry name" value="RnfH_sf"/>
</dbReference>
<dbReference type="NCBIfam" id="NF002490">
    <property type="entry name" value="PRK01777.1"/>
    <property type="match status" value="1"/>
</dbReference>
<dbReference type="PANTHER" id="PTHR37483">
    <property type="entry name" value="UPF0125 PROTEIN RATB"/>
    <property type="match status" value="1"/>
</dbReference>
<dbReference type="PANTHER" id="PTHR37483:SF1">
    <property type="entry name" value="UPF0125 PROTEIN RATB"/>
    <property type="match status" value="1"/>
</dbReference>
<dbReference type="Pfam" id="PF03658">
    <property type="entry name" value="Ub-RnfH"/>
    <property type="match status" value="1"/>
</dbReference>
<dbReference type="SUPFAM" id="SSF54285">
    <property type="entry name" value="MoaD/ThiS"/>
    <property type="match status" value="1"/>
</dbReference>
<evidence type="ECO:0000255" key="1">
    <source>
        <dbReference type="HAMAP-Rule" id="MF_00460"/>
    </source>
</evidence>
<reference key="1">
    <citation type="journal article" date="2006" name="Genome Biol.">
        <title>Genomic analysis reveals that Pseudomonas aeruginosa virulence is combinatorial.</title>
        <authorList>
            <person name="Lee D.G."/>
            <person name="Urbach J.M."/>
            <person name="Wu G."/>
            <person name="Liberati N.T."/>
            <person name="Feinbaum R.L."/>
            <person name="Miyata S."/>
            <person name="Diggins L.T."/>
            <person name="He J."/>
            <person name="Saucier M."/>
            <person name="Deziel E."/>
            <person name="Friedman L."/>
            <person name="Li L."/>
            <person name="Grills G."/>
            <person name="Montgomery K."/>
            <person name="Kucherlapati R."/>
            <person name="Rahme L.G."/>
            <person name="Ausubel F.M."/>
        </authorList>
    </citation>
    <scope>NUCLEOTIDE SEQUENCE [LARGE SCALE GENOMIC DNA]</scope>
    <source>
        <strain>UCBPP-PA14</strain>
    </source>
</reference>
<name>RNFH_PSEAB</name>